<gene>
    <name evidence="1" type="primary">rpmA</name>
    <name type="ordered locus">Veis_3916</name>
</gene>
<comment type="similarity">
    <text evidence="1">Belongs to the bacterial ribosomal protein bL27 family.</text>
</comment>
<feature type="chain" id="PRO_1000017643" description="Large ribosomal subunit protein bL27">
    <location>
        <begin position="1"/>
        <end position="91"/>
    </location>
</feature>
<feature type="region of interest" description="Disordered" evidence="2">
    <location>
        <begin position="1"/>
        <end position="20"/>
    </location>
</feature>
<feature type="compositionally biased region" description="Gly residues" evidence="2">
    <location>
        <begin position="1"/>
        <end position="10"/>
    </location>
</feature>
<reference key="1">
    <citation type="submission" date="2006-12" db="EMBL/GenBank/DDBJ databases">
        <title>Complete sequence of chromosome 1 of Verminephrobacter eiseniae EF01-2.</title>
        <authorList>
            <person name="Copeland A."/>
            <person name="Lucas S."/>
            <person name="Lapidus A."/>
            <person name="Barry K."/>
            <person name="Detter J.C."/>
            <person name="Glavina del Rio T."/>
            <person name="Dalin E."/>
            <person name="Tice H."/>
            <person name="Pitluck S."/>
            <person name="Chertkov O."/>
            <person name="Brettin T."/>
            <person name="Bruce D."/>
            <person name="Han C."/>
            <person name="Tapia R."/>
            <person name="Gilna P."/>
            <person name="Schmutz J."/>
            <person name="Larimer F."/>
            <person name="Land M."/>
            <person name="Hauser L."/>
            <person name="Kyrpides N."/>
            <person name="Kim E."/>
            <person name="Stahl D."/>
            <person name="Richardson P."/>
        </authorList>
    </citation>
    <scope>NUCLEOTIDE SEQUENCE [LARGE SCALE GENOMIC DNA]</scope>
    <source>
        <strain>EF01-2</strain>
    </source>
</reference>
<name>RL27_VEREI</name>
<proteinExistence type="inferred from homology"/>
<evidence type="ECO:0000255" key="1">
    <source>
        <dbReference type="HAMAP-Rule" id="MF_00539"/>
    </source>
</evidence>
<evidence type="ECO:0000256" key="2">
    <source>
        <dbReference type="SAM" id="MobiDB-lite"/>
    </source>
</evidence>
<evidence type="ECO:0000305" key="3"/>
<organism>
    <name type="scientific">Verminephrobacter eiseniae (strain EF01-2)</name>
    <dbReference type="NCBI Taxonomy" id="391735"/>
    <lineage>
        <taxon>Bacteria</taxon>
        <taxon>Pseudomonadati</taxon>
        <taxon>Pseudomonadota</taxon>
        <taxon>Betaproteobacteria</taxon>
        <taxon>Burkholderiales</taxon>
        <taxon>Comamonadaceae</taxon>
        <taxon>Verminephrobacter</taxon>
    </lineage>
</organism>
<dbReference type="EMBL" id="CP000542">
    <property type="protein sequence ID" value="ABM59623.1"/>
    <property type="molecule type" value="Genomic_DNA"/>
</dbReference>
<dbReference type="RefSeq" id="WP_011811610.1">
    <property type="nucleotide sequence ID" value="NC_008786.1"/>
</dbReference>
<dbReference type="SMR" id="A1WPR6"/>
<dbReference type="STRING" id="391735.Veis_3916"/>
<dbReference type="GeneID" id="76462266"/>
<dbReference type="KEGG" id="vei:Veis_3916"/>
<dbReference type="eggNOG" id="COG0211">
    <property type="taxonomic scope" value="Bacteria"/>
</dbReference>
<dbReference type="HOGENOM" id="CLU_095424_4_1_4"/>
<dbReference type="OrthoDB" id="9803474at2"/>
<dbReference type="Proteomes" id="UP000000374">
    <property type="component" value="Chromosome"/>
</dbReference>
<dbReference type="GO" id="GO:0022625">
    <property type="term" value="C:cytosolic large ribosomal subunit"/>
    <property type="evidence" value="ECO:0007669"/>
    <property type="project" value="TreeGrafter"/>
</dbReference>
<dbReference type="GO" id="GO:0003735">
    <property type="term" value="F:structural constituent of ribosome"/>
    <property type="evidence" value="ECO:0007669"/>
    <property type="project" value="InterPro"/>
</dbReference>
<dbReference type="GO" id="GO:0006412">
    <property type="term" value="P:translation"/>
    <property type="evidence" value="ECO:0007669"/>
    <property type="project" value="UniProtKB-UniRule"/>
</dbReference>
<dbReference type="FunFam" id="2.40.50.100:FF:000020">
    <property type="entry name" value="50S ribosomal protein L27"/>
    <property type="match status" value="1"/>
</dbReference>
<dbReference type="Gene3D" id="2.40.50.100">
    <property type="match status" value="1"/>
</dbReference>
<dbReference type="HAMAP" id="MF_00539">
    <property type="entry name" value="Ribosomal_bL27"/>
    <property type="match status" value="1"/>
</dbReference>
<dbReference type="InterPro" id="IPR001684">
    <property type="entry name" value="Ribosomal_bL27"/>
</dbReference>
<dbReference type="InterPro" id="IPR018261">
    <property type="entry name" value="Ribosomal_bL27_CS"/>
</dbReference>
<dbReference type="NCBIfam" id="TIGR00062">
    <property type="entry name" value="L27"/>
    <property type="match status" value="1"/>
</dbReference>
<dbReference type="PANTHER" id="PTHR15893:SF0">
    <property type="entry name" value="LARGE RIBOSOMAL SUBUNIT PROTEIN BL27M"/>
    <property type="match status" value="1"/>
</dbReference>
<dbReference type="PANTHER" id="PTHR15893">
    <property type="entry name" value="RIBOSOMAL PROTEIN L27"/>
    <property type="match status" value="1"/>
</dbReference>
<dbReference type="Pfam" id="PF01016">
    <property type="entry name" value="Ribosomal_L27"/>
    <property type="match status" value="1"/>
</dbReference>
<dbReference type="PRINTS" id="PR00063">
    <property type="entry name" value="RIBOSOMALL27"/>
</dbReference>
<dbReference type="SUPFAM" id="SSF110324">
    <property type="entry name" value="Ribosomal L27 protein-like"/>
    <property type="match status" value="1"/>
</dbReference>
<dbReference type="PROSITE" id="PS00831">
    <property type="entry name" value="RIBOSOMAL_L27"/>
    <property type="match status" value="1"/>
</dbReference>
<sequence>MAQKKGGGSTRNGRDSQPKMLGVKVFGGQRITAGSIIVRQRGTRFHPGSNVGMGKDHSLFALVDGQVSFGIKGALSKPTVNVTPAASAPPV</sequence>
<keyword id="KW-1185">Reference proteome</keyword>
<keyword id="KW-0687">Ribonucleoprotein</keyword>
<keyword id="KW-0689">Ribosomal protein</keyword>
<protein>
    <recommendedName>
        <fullName evidence="1">Large ribosomal subunit protein bL27</fullName>
    </recommendedName>
    <alternativeName>
        <fullName evidence="3">50S ribosomal protein L27</fullName>
    </alternativeName>
</protein>
<accession>A1WPR6</accession>